<gene>
    <name evidence="1" type="primary">rbsD</name>
    <name type="ordered locus">CPE1631</name>
</gene>
<sequence length="131" mass="14641">MRKTSLLNSNISSVISKMGHTDMLAIGDCGLPIPKETERIDLALIKGVPGFIETLKAILEELQVEEVLIAKETEKVSPELFIEIKEIIKDTKITFISHEELKKELKYCKAVVRTGEQTPYANIILKSGVVF</sequence>
<feature type="chain" id="PRO_0000346185" description="D-ribose pyranase">
    <location>
        <begin position="1"/>
        <end position="131"/>
    </location>
</feature>
<feature type="active site" description="Proton donor" evidence="1">
    <location>
        <position position="20"/>
    </location>
</feature>
<feature type="binding site" evidence="1">
    <location>
        <position position="28"/>
    </location>
    <ligand>
        <name>substrate</name>
    </ligand>
</feature>
<feature type="binding site" evidence="1">
    <location>
        <position position="98"/>
    </location>
    <ligand>
        <name>substrate</name>
    </ligand>
</feature>
<feature type="binding site" evidence="1">
    <location>
        <begin position="120"/>
        <end position="122"/>
    </location>
    <ligand>
        <name>substrate</name>
    </ligand>
</feature>
<evidence type="ECO:0000255" key="1">
    <source>
        <dbReference type="HAMAP-Rule" id="MF_01661"/>
    </source>
</evidence>
<organism>
    <name type="scientific">Clostridium perfringens (strain 13 / Type A)</name>
    <dbReference type="NCBI Taxonomy" id="195102"/>
    <lineage>
        <taxon>Bacteria</taxon>
        <taxon>Bacillati</taxon>
        <taxon>Bacillota</taxon>
        <taxon>Clostridia</taxon>
        <taxon>Eubacteriales</taxon>
        <taxon>Clostridiaceae</taxon>
        <taxon>Clostridium</taxon>
    </lineage>
</organism>
<comment type="function">
    <text evidence="1">Catalyzes the interconversion of beta-pyran and beta-furan forms of D-ribose.</text>
</comment>
<comment type="catalytic activity">
    <reaction evidence="1">
        <text>beta-D-ribopyranose = beta-D-ribofuranose</text>
        <dbReference type="Rhea" id="RHEA:25432"/>
        <dbReference type="ChEBI" id="CHEBI:27476"/>
        <dbReference type="ChEBI" id="CHEBI:47002"/>
        <dbReference type="EC" id="5.4.99.62"/>
    </reaction>
</comment>
<comment type="pathway">
    <text evidence="1">Carbohydrate metabolism; D-ribose degradation; D-ribose 5-phosphate from beta-D-ribopyranose: step 1/2.</text>
</comment>
<comment type="subunit">
    <text evidence="1">Homodecamer.</text>
</comment>
<comment type="subcellular location">
    <subcellularLocation>
        <location evidence="1">Cytoplasm</location>
    </subcellularLocation>
</comment>
<comment type="similarity">
    <text evidence="1">Belongs to the RbsD / FucU family. RbsD subfamily.</text>
</comment>
<dbReference type="EC" id="5.4.99.62" evidence="1"/>
<dbReference type="EMBL" id="BA000016">
    <property type="protein sequence ID" value="BAB81337.1"/>
    <property type="molecule type" value="Genomic_DNA"/>
</dbReference>
<dbReference type="RefSeq" id="WP_011010551.1">
    <property type="nucleotide sequence ID" value="NC_003366.1"/>
</dbReference>
<dbReference type="SMR" id="Q8XJX2"/>
<dbReference type="STRING" id="195102.gene:10490895"/>
<dbReference type="KEGG" id="cpe:CPE1631"/>
<dbReference type="HOGENOM" id="CLU_135498_0_0_9"/>
<dbReference type="UniPathway" id="UPA00916">
    <property type="reaction ID" value="UER00888"/>
</dbReference>
<dbReference type="Proteomes" id="UP000000818">
    <property type="component" value="Chromosome"/>
</dbReference>
<dbReference type="GO" id="GO:0005829">
    <property type="term" value="C:cytosol"/>
    <property type="evidence" value="ECO:0007669"/>
    <property type="project" value="TreeGrafter"/>
</dbReference>
<dbReference type="GO" id="GO:0062193">
    <property type="term" value="F:D-ribose pyranase activity"/>
    <property type="evidence" value="ECO:0007669"/>
    <property type="project" value="UniProtKB-EC"/>
</dbReference>
<dbReference type="GO" id="GO:0016872">
    <property type="term" value="F:intramolecular lyase activity"/>
    <property type="evidence" value="ECO:0007669"/>
    <property type="project" value="UniProtKB-UniRule"/>
</dbReference>
<dbReference type="GO" id="GO:0048029">
    <property type="term" value="F:monosaccharide binding"/>
    <property type="evidence" value="ECO:0007669"/>
    <property type="project" value="InterPro"/>
</dbReference>
<dbReference type="GO" id="GO:0019303">
    <property type="term" value="P:D-ribose catabolic process"/>
    <property type="evidence" value="ECO:0007669"/>
    <property type="project" value="UniProtKB-UniRule"/>
</dbReference>
<dbReference type="Gene3D" id="3.40.1650.10">
    <property type="entry name" value="RbsD-like domain"/>
    <property type="match status" value="1"/>
</dbReference>
<dbReference type="HAMAP" id="MF_01661">
    <property type="entry name" value="D_rib_pyranase"/>
    <property type="match status" value="1"/>
</dbReference>
<dbReference type="InterPro" id="IPR023064">
    <property type="entry name" value="D-ribose_pyranase"/>
</dbReference>
<dbReference type="InterPro" id="IPR023750">
    <property type="entry name" value="RbsD-like_sf"/>
</dbReference>
<dbReference type="InterPro" id="IPR007721">
    <property type="entry name" value="RbsD_FucU"/>
</dbReference>
<dbReference type="NCBIfam" id="NF008761">
    <property type="entry name" value="PRK11797.1"/>
    <property type="match status" value="1"/>
</dbReference>
<dbReference type="PANTHER" id="PTHR37831">
    <property type="entry name" value="D-RIBOSE PYRANASE"/>
    <property type="match status" value="1"/>
</dbReference>
<dbReference type="PANTHER" id="PTHR37831:SF1">
    <property type="entry name" value="D-RIBOSE PYRANASE"/>
    <property type="match status" value="1"/>
</dbReference>
<dbReference type="Pfam" id="PF05025">
    <property type="entry name" value="RbsD_FucU"/>
    <property type="match status" value="1"/>
</dbReference>
<dbReference type="SUPFAM" id="SSF102546">
    <property type="entry name" value="RbsD-like"/>
    <property type="match status" value="1"/>
</dbReference>
<reference key="1">
    <citation type="journal article" date="2002" name="Proc. Natl. Acad. Sci. U.S.A.">
        <title>Complete genome sequence of Clostridium perfringens, an anaerobic flesh-eater.</title>
        <authorList>
            <person name="Shimizu T."/>
            <person name="Ohtani K."/>
            <person name="Hirakawa H."/>
            <person name="Ohshima K."/>
            <person name="Yamashita A."/>
            <person name="Shiba T."/>
            <person name="Ogasawara N."/>
            <person name="Hattori M."/>
            <person name="Kuhara S."/>
            <person name="Hayashi H."/>
        </authorList>
    </citation>
    <scope>NUCLEOTIDE SEQUENCE [LARGE SCALE GENOMIC DNA]</scope>
    <source>
        <strain>13 / Type A</strain>
    </source>
</reference>
<protein>
    <recommendedName>
        <fullName evidence="1">D-ribose pyranase</fullName>
        <ecNumber evidence="1">5.4.99.62</ecNumber>
    </recommendedName>
</protein>
<keyword id="KW-0119">Carbohydrate metabolism</keyword>
<keyword id="KW-0963">Cytoplasm</keyword>
<keyword id="KW-0413">Isomerase</keyword>
<keyword id="KW-1185">Reference proteome</keyword>
<name>RBSD_CLOPE</name>
<accession>Q8XJX2</accession>
<proteinExistence type="inferred from homology"/>